<organism>
    <name type="scientific">Homo sapiens</name>
    <name type="common">Human</name>
    <dbReference type="NCBI Taxonomy" id="9606"/>
    <lineage>
        <taxon>Eukaryota</taxon>
        <taxon>Metazoa</taxon>
        <taxon>Chordata</taxon>
        <taxon>Craniata</taxon>
        <taxon>Vertebrata</taxon>
        <taxon>Euteleostomi</taxon>
        <taxon>Mammalia</taxon>
        <taxon>Eutheria</taxon>
        <taxon>Euarchontoglires</taxon>
        <taxon>Primates</taxon>
        <taxon>Haplorrhini</taxon>
        <taxon>Catarrhini</taxon>
        <taxon>Hominidae</taxon>
        <taxon>Homo</taxon>
    </lineage>
</organism>
<gene>
    <name evidence="8" type="primary">EFHC2</name>
</gene>
<protein>
    <recommendedName>
        <fullName>EF-hand domain-containing family member C2</fullName>
    </recommendedName>
</protein>
<evidence type="ECO:0000250" key="1">
    <source>
        <dbReference type="UniProtKB" id="Q9D485"/>
    </source>
</evidence>
<evidence type="ECO:0000255" key="2">
    <source>
        <dbReference type="PROSITE-ProRule" id="PRU00448"/>
    </source>
</evidence>
<evidence type="ECO:0000255" key="3">
    <source>
        <dbReference type="PROSITE-ProRule" id="PRU00665"/>
    </source>
</evidence>
<evidence type="ECO:0000269" key="4">
    <source>
    </source>
</evidence>
<evidence type="ECO:0000269" key="5">
    <source>
    </source>
</evidence>
<evidence type="ECO:0000303" key="6">
    <source>
    </source>
</evidence>
<evidence type="ECO:0000305" key="7"/>
<evidence type="ECO:0000312" key="8">
    <source>
        <dbReference type="HGNC" id="HGNC:26233"/>
    </source>
</evidence>
<evidence type="ECO:0007744" key="9">
    <source>
        <dbReference type="PDB" id="7UNG"/>
    </source>
</evidence>
<evidence type="ECO:0007829" key="10">
    <source>
        <dbReference type="PDB" id="2Z14"/>
    </source>
</evidence>
<proteinExistence type="evidence at protein level"/>
<sequence>MALPLLPGNSFNRNVGKEKFHKSQHWGFCNNVMMLVSDEKPGIGGEPLLGQKIKPKCSIYPKGDGSDVPSWVAFDKQVLSFDAYLEEEVLDKSQTNYRIRYYKIYFYPEDDTIQVNEPEVKNSGLLQGTSIRRHRITLPPPDEDQFYTVYHFNVGTEVVFYGRTFKIYDCDAFTRNFLRKIGVKVNPPVQCPEDPYMKIRREVVEHVEPLRPYESLDTLKQFLQYHGKILCFFCLWDDSVSMFGDRRELILHYFLCDDTIEIKELLPHSSGRDALKMFLRRSKLPKNCPPRVYQPGQITDRAVLNSYGDFIKNQADGYLFDRYKLGKVDQEFYKDSDLSLGVTINVWGRKVLLYDCDEFTKSYYKSKYGIENFTSVSCKPPSPPPKIERKFPPYNGFGSEEDSLRNCIDLKPTPHRRNFKKFMEKDSYGSKSNILRFFAKLVTDKCVDLDRMFVISYYLGDDTISVFEPIERNSGIAGGMFLKRSRVKKPGQEVFKSELSEYIKAEELYIGVTVNVNGYLFRLLNADEYTLNYMEQNTDKYPFSNLKLALQKLKQEEGKSRELKQVFKAADSKHTNMVDYNTFRDILMSLTVGNLAEQEFVTIARHYRVPEGTCSDMDFLIALAHEKFKKNMFENFDTFIYSCVYEDREKKNVLPTKDIKRLCKSSRLPLSDDLLESLLSRFEDSEKQIDYKSFFSALNWRKNPVPELQPASYLKERCEDVWLGMPSPIPAKYIDYWTFLKDAFGLEEE</sequence>
<dbReference type="EMBL" id="AK026254">
    <property type="protein sequence ID" value="BAB15413.1"/>
    <property type="molecule type" value="mRNA"/>
</dbReference>
<dbReference type="EMBL" id="AC018719">
    <property type="status" value="NOT_ANNOTATED_CDS"/>
    <property type="molecule type" value="Genomic_DNA"/>
</dbReference>
<dbReference type="EMBL" id="AL133344">
    <property type="status" value="NOT_ANNOTATED_CDS"/>
    <property type="molecule type" value="Genomic_DNA"/>
</dbReference>
<dbReference type="EMBL" id="AL359744">
    <property type="status" value="NOT_ANNOTATED_CDS"/>
    <property type="molecule type" value="Genomic_DNA"/>
</dbReference>
<dbReference type="EMBL" id="BC031039">
    <property type="protein sequence ID" value="AAH31039.1"/>
    <property type="molecule type" value="mRNA"/>
</dbReference>
<dbReference type="EMBL" id="CR749363">
    <property type="protein sequence ID" value="CAH18216.1"/>
    <property type="molecule type" value="mRNA"/>
</dbReference>
<dbReference type="CCDS" id="CCDS55405.1">
    <molecule id="Q5JST6-1"/>
</dbReference>
<dbReference type="RefSeq" id="NP_079460.2">
    <molecule id="Q5JST6-1"/>
    <property type="nucleotide sequence ID" value="NM_025184.3"/>
</dbReference>
<dbReference type="PDB" id="2Z13">
    <property type="method" value="X-ray"/>
    <property type="resolution" value="1.84 A"/>
    <property type="chains" value="A=71-190"/>
</dbReference>
<dbReference type="PDB" id="2Z14">
    <property type="method" value="X-ray"/>
    <property type="resolution" value="1.68 A"/>
    <property type="chains" value="A=71-190"/>
</dbReference>
<dbReference type="PDB" id="7UNG">
    <property type="method" value="EM"/>
    <property type="resolution" value="3.60 A"/>
    <property type="chains" value="W/X/Y/Z=1-749"/>
</dbReference>
<dbReference type="PDB" id="8J07">
    <property type="method" value="EM"/>
    <property type="resolution" value="4.10 A"/>
    <property type="chains" value="3G/3H/3I/3J/3K/3L/3M=1-749"/>
</dbReference>
<dbReference type="PDBsum" id="2Z13"/>
<dbReference type="PDBsum" id="2Z14"/>
<dbReference type="PDBsum" id="7UNG"/>
<dbReference type="PDBsum" id="8J07"/>
<dbReference type="EMDB" id="EMD-26624"/>
<dbReference type="EMDB" id="EMD-35888"/>
<dbReference type="SMR" id="Q5JST6"/>
<dbReference type="BioGRID" id="123203">
    <property type="interactions" value="119"/>
</dbReference>
<dbReference type="FunCoup" id="Q5JST6">
    <property type="interactions" value="102"/>
</dbReference>
<dbReference type="IntAct" id="Q5JST6">
    <property type="interactions" value="105"/>
</dbReference>
<dbReference type="STRING" id="9606.ENSP00000404232"/>
<dbReference type="iPTMnet" id="Q5JST6"/>
<dbReference type="PhosphoSitePlus" id="Q5JST6"/>
<dbReference type="BioMuta" id="EFHC2"/>
<dbReference type="DMDM" id="115502163"/>
<dbReference type="jPOST" id="Q5JST6"/>
<dbReference type="MassIVE" id="Q5JST6"/>
<dbReference type="PaxDb" id="9606-ENSP00000404232"/>
<dbReference type="PeptideAtlas" id="Q5JST6"/>
<dbReference type="ProteomicsDB" id="63171">
    <molecule id="Q5JST6-1"/>
</dbReference>
<dbReference type="ProteomicsDB" id="63172">
    <molecule id="Q5JST6-2"/>
</dbReference>
<dbReference type="Antibodypedia" id="25126">
    <property type="antibodies" value="97 antibodies from 16 providers"/>
</dbReference>
<dbReference type="DNASU" id="80258"/>
<dbReference type="Ensembl" id="ENST00000420999.2">
    <molecule id="Q5JST6-1"/>
    <property type="protein sequence ID" value="ENSP00000404232.2"/>
    <property type="gene ID" value="ENSG00000183690.13"/>
</dbReference>
<dbReference type="GeneID" id="80258"/>
<dbReference type="KEGG" id="hsa:80258"/>
<dbReference type="MANE-Select" id="ENST00000420999.2">
    <property type="protein sequence ID" value="ENSP00000404232.2"/>
    <property type="RefSeq nucleotide sequence ID" value="NM_025184.4"/>
    <property type="RefSeq protein sequence ID" value="NP_079460.2"/>
</dbReference>
<dbReference type="UCSC" id="uc004dgb.5">
    <molecule id="Q5JST6-1"/>
    <property type="organism name" value="human"/>
</dbReference>
<dbReference type="AGR" id="HGNC:26233"/>
<dbReference type="CTD" id="80258"/>
<dbReference type="DisGeNET" id="80258"/>
<dbReference type="GeneCards" id="EFHC2"/>
<dbReference type="HGNC" id="HGNC:26233">
    <property type="gene designation" value="EFHC2"/>
</dbReference>
<dbReference type="HPA" id="ENSG00000183690">
    <property type="expression patterns" value="Tissue enhanced (choroid plexus, fallopian tube)"/>
</dbReference>
<dbReference type="MalaCards" id="EFHC2"/>
<dbReference type="MIM" id="300817">
    <property type="type" value="gene"/>
</dbReference>
<dbReference type="neXtProt" id="NX_Q5JST6"/>
<dbReference type="OpenTargets" id="ENSG00000183690"/>
<dbReference type="PharmGKB" id="PA134938637"/>
<dbReference type="VEuPathDB" id="HostDB:ENSG00000183690"/>
<dbReference type="eggNOG" id="KOG0043">
    <property type="taxonomic scope" value="Eukaryota"/>
</dbReference>
<dbReference type="GeneTree" id="ENSGT00530000063528"/>
<dbReference type="HOGENOM" id="CLU_018366_1_0_1"/>
<dbReference type="InParanoid" id="Q5JST6"/>
<dbReference type="OMA" id="RFSCKQP"/>
<dbReference type="OrthoDB" id="10255210at2759"/>
<dbReference type="PAN-GO" id="Q5JST6">
    <property type="GO annotations" value="8 GO annotations based on evolutionary models"/>
</dbReference>
<dbReference type="PhylomeDB" id="Q5JST6"/>
<dbReference type="TreeFam" id="TF314504"/>
<dbReference type="PathwayCommons" id="Q5JST6"/>
<dbReference type="SignaLink" id="Q5JST6"/>
<dbReference type="BioGRID-ORCS" id="80258">
    <property type="hits" value="5 hits in 767 CRISPR screens"/>
</dbReference>
<dbReference type="ChiTaRS" id="EFHC2">
    <property type="organism name" value="human"/>
</dbReference>
<dbReference type="EvolutionaryTrace" id="Q5JST6"/>
<dbReference type="GeneWiki" id="EFHC2"/>
<dbReference type="GenomeRNAi" id="80258"/>
<dbReference type="Pharos" id="Q5JST6">
    <property type="development level" value="Tbio"/>
</dbReference>
<dbReference type="PRO" id="PR:Q5JST6"/>
<dbReference type="Proteomes" id="UP000005640">
    <property type="component" value="Chromosome X"/>
</dbReference>
<dbReference type="RNAct" id="Q5JST6">
    <property type="molecule type" value="protein"/>
</dbReference>
<dbReference type="Bgee" id="ENSG00000183690">
    <property type="expression patterns" value="Expressed in bronchial epithelial cell and 137 other cell types or tissues"/>
</dbReference>
<dbReference type="GO" id="GO:0160111">
    <property type="term" value="C:axonemal A tubule inner sheath"/>
    <property type="evidence" value="ECO:0000250"/>
    <property type="project" value="UniProtKB"/>
</dbReference>
<dbReference type="GO" id="GO:0005879">
    <property type="term" value="C:axonemal microtubule"/>
    <property type="evidence" value="ECO:0000314"/>
    <property type="project" value="UniProtKB"/>
</dbReference>
<dbReference type="GO" id="GO:0036064">
    <property type="term" value="C:ciliary basal body"/>
    <property type="evidence" value="ECO:0000314"/>
    <property type="project" value="GO_Central"/>
</dbReference>
<dbReference type="GO" id="GO:0036126">
    <property type="term" value="C:sperm flagellum"/>
    <property type="evidence" value="ECO:0000250"/>
    <property type="project" value="UniProtKB"/>
</dbReference>
<dbReference type="GO" id="GO:0005509">
    <property type="term" value="F:calcium ion binding"/>
    <property type="evidence" value="ECO:0007669"/>
    <property type="project" value="InterPro"/>
</dbReference>
<dbReference type="GO" id="GO:1990830">
    <property type="term" value="P:cellular response to leukemia inhibitory factor"/>
    <property type="evidence" value="ECO:0007669"/>
    <property type="project" value="Ensembl"/>
</dbReference>
<dbReference type="GO" id="GO:0030317">
    <property type="term" value="P:flagellated sperm motility"/>
    <property type="evidence" value="ECO:0000250"/>
    <property type="project" value="UniProtKB"/>
</dbReference>
<dbReference type="GO" id="GO:0010975">
    <property type="term" value="P:regulation of neuron projection development"/>
    <property type="evidence" value="ECO:0000318"/>
    <property type="project" value="GO_Central"/>
</dbReference>
<dbReference type="FunFam" id="2.30.29.170:FF:000002">
    <property type="entry name" value="EF-hand domain (C-terminal) containing 1"/>
    <property type="match status" value="1"/>
</dbReference>
<dbReference type="FunFam" id="2.30.29.170:FF:000003">
    <property type="entry name" value="EF-hand domain (C-terminal) containing 1"/>
    <property type="match status" value="1"/>
</dbReference>
<dbReference type="FunFam" id="2.30.29.170:FF:000001">
    <property type="entry name" value="EF-hand domain containing 1"/>
    <property type="match status" value="1"/>
</dbReference>
<dbReference type="FunFam" id="1.10.238.10:FF:000375">
    <property type="entry name" value="EF-hand domain-containing family member C2"/>
    <property type="match status" value="1"/>
</dbReference>
<dbReference type="Gene3D" id="2.30.29.170">
    <property type="match status" value="3"/>
</dbReference>
<dbReference type="Gene3D" id="1.10.238.10">
    <property type="entry name" value="EF-hand"/>
    <property type="match status" value="1"/>
</dbReference>
<dbReference type="InterPro" id="IPR006602">
    <property type="entry name" value="DM10_dom"/>
</dbReference>
<dbReference type="InterPro" id="IPR011992">
    <property type="entry name" value="EF-hand-dom_pair"/>
</dbReference>
<dbReference type="InterPro" id="IPR002048">
    <property type="entry name" value="EF_hand_dom"/>
</dbReference>
<dbReference type="InterPro" id="IPR040193">
    <property type="entry name" value="EFHC1/EFHC2/EFHB"/>
</dbReference>
<dbReference type="PANTHER" id="PTHR12086">
    <property type="entry name" value="EF-HAND DOMAIN C-TERMINAL CONTAINING PROTEIN"/>
    <property type="match status" value="1"/>
</dbReference>
<dbReference type="PANTHER" id="PTHR12086:SF11">
    <property type="entry name" value="EF-HAND DOMAIN-CONTAINING FAMILY MEMBER C2"/>
    <property type="match status" value="1"/>
</dbReference>
<dbReference type="Pfam" id="PF06565">
    <property type="entry name" value="DM10_dom"/>
    <property type="match status" value="4"/>
</dbReference>
<dbReference type="SMART" id="SM00676">
    <property type="entry name" value="DM10"/>
    <property type="match status" value="3"/>
</dbReference>
<dbReference type="SUPFAM" id="SSF47473">
    <property type="entry name" value="EF-hand"/>
    <property type="match status" value="1"/>
</dbReference>
<dbReference type="PROSITE" id="PS51336">
    <property type="entry name" value="DM10"/>
    <property type="match status" value="3"/>
</dbReference>
<dbReference type="PROSITE" id="PS50222">
    <property type="entry name" value="EF_HAND_2"/>
    <property type="match status" value="1"/>
</dbReference>
<reference key="1">
    <citation type="journal article" date="2004" name="Nat. Genet.">
        <title>Complete sequencing and characterization of 21,243 full-length human cDNAs.</title>
        <authorList>
            <person name="Ota T."/>
            <person name="Suzuki Y."/>
            <person name="Nishikawa T."/>
            <person name="Otsuki T."/>
            <person name="Sugiyama T."/>
            <person name="Irie R."/>
            <person name="Wakamatsu A."/>
            <person name="Hayashi K."/>
            <person name="Sato H."/>
            <person name="Nagai K."/>
            <person name="Kimura K."/>
            <person name="Makita H."/>
            <person name="Sekine M."/>
            <person name="Obayashi M."/>
            <person name="Nishi T."/>
            <person name="Shibahara T."/>
            <person name="Tanaka T."/>
            <person name="Ishii S."/>
            <person name="Yamamoto J."/>
            <person name="Saito K."/>
            <person name="Kawai Y."/>
            <person name="Isono Y."/>
            <person name="Nakamura Y."/>
            <person name="Nagahari K."/>
            <person name="Murakami K."/>
            <person name="Yasuda T."/>
            <person name="Iwayanagi T."/>
            <person name="Wagatsuma M."/>
            <person name="Shiratori A."/>
            <person name="Sudo H."/>
            <person name="Hosoiri T."/>
            <person name="Kaku Y."/>
            <person name="Kodaira H."/>
            <person name="Kondo H."/>
            <person name="Sugawara M."/>
            <person name="Takahashi M."/>
            <person name="Kanda K."/>
            <person name="Yokoi T."/>
            <person name="Furuya T."/>
            <person name="Kikkawa E."/>
            <person name="Omura Y."/>
            <person name="Abe K."/>
            <person name="Kamihara K."/>
            <person name="Katsuta N."/>
            <person name="Sato K."/>
            <person name="Tanikawa M."/>
            <person name="Yamazaki M."/>
            <person name="Ninomiya K."/>
            <person name="Ishibashi T."/>
            <person name="Yamashita H."/>
            <person name="Murakawa K."/>
            <person name="Fujimori K."/>
            <person name="Tanai H."/>
            <person name="Kimata M."/>
            <person name="Watanabe M."/>
            <person name="Hiraoka S."/>
            <person name="Chiba Y."/>
            <person name="Ishida S."/>
            <person name="Ono Y."/>
            <person name="Takiguchi S."/>
            <person name="Watanabe S."/>
            <person name="Yosida M."/>
            <person name="Hotuta T."/>
            <person name="Kusano J."/>
            <person name="Kanehori K."/>
            <person name="Takahashi-Fujii A."/>
            <person name="Hara H."/>
            <person name="Tanase T.-O."/>
            <person name="Nomura Y."/>
            <person name="Togiya S."/>
            <person name="Komai F."/>
            <person name="Hara R."/>
            <person name="Takeuchi K."/>
            <person name="Arita M."/>
            <person name="Imose N."/>
            <person name="Musashino K."/>
            <person name="Yuuki H."/>
            <person name="Oshima A."/>
            <person name="Sasaki N."/>
            <person name="Aotsuka S."/>
            <person name="Yoshikawa Y."/>
            <person name="Matsunawa H."/>
            <person name="Ichihara T."/>
            <person name="Shiohata N."/>
            <person name="Sano S."/>
            <person name="Moriya S."/>
            <person name="Momiyama H."/>
            <person name="Satoh N."/>
            <person name="Takami S."/>
            <person name="Terashima Y."/>
            <person name="Suzuki O."/>
            <person name="Nakagawa S."/>
            <person name="Senoh A."/>
            <person name="Mizoguchi H."/>
            <person name="Goto Y."/>
            <person name="Shimizu F."/>
            <person name="Wakebe H."/>
            <person name="Hishigaki H."/>
            <person name="Watanabe T."/>
            <person name="Sugiyama A."/>
            <person name="Takemoto M."/>
            <person name="Kawakami B."/>
            <person name="Yamazaki M."/>
            <person name="Watanabe K."/>
            <person name="Kumagai A."/>
            <person name="Itakura S."/>
            <person name="Fukuzumi Y."/>
            <person name="Fujimori Y."/>
            <person name="Komiyama M."/>
            <person name="Tashiro H."/>
            <person name="Tanigami A."/>
            <person name="Fujiwara T."/>
            <person name="Ono T."/>
            <person name="Yamada K."/>
            <person name="Fujii Y."/>
            <person name="Ozaki K."/>
            <person name="Hirao M."/>
            <person name="Ohmori Y."/>
            <person name="Kawabata A."/>
            <person name="Hikiji T."/>
            <person name="Kobatake N."/>
            <person name="Inagaki H."/>
            <person name="Ikema Y."/>
            <person name="Okamoto S."/>
            <person name="Okitani R."/>
            <person name="Kawakami T."/>
            <person name="Noguchi S."/>
            <person name="Itoh T."/>
            <person name="Shigeta K."/>
            <person name="Senba T."/>
            <person name="Matsumura K."/>
            <person name="Nakajima Y."/>
            <person name="Mizuno T."/>
            <person name="Morinaga M."/>
            <person name="Sasaki M."/>
            <person name="Togashi T."/>
            <person name="Oyama M."/>
            <person name="Hata H."/>
            <person name="Watanabe M."/>
            <person name="Komatsu T."/>
            <person name="Mizushima-Sugano J."/>
            <person name="Satoh T."/>
            <person name="Shirai Y."/>
            <person name="Takahashi Y."/>
            <person name="Nakagawa K."/>
            <person name="Okumura K."/>
            <person name="Nagase T."/>
            <person name="Nomura N."/>
            <person name="Kikuchi H."/>
            <person name="Masuho Y."/>
            <person name="Yamashita R."/>
            <person name="Nakai K."/>
            <person name="Yada T."/>
            <person name="Nakamura Y."/>
            <person name="Ohara O."/>
            <person name="Isogai T."/>
            <person name="Sugano S."/>
        </authorList>
    </citation>
    <scope>NUCLEOTIDE SEQUENCE [LARGE SCALE MRNA] (ISOFORM 2)</scope>
    <source>
        <tissue>Small intestine</tissue>
    </source>
</reference>
<reference key="2">
    <citation type="journal article" date="2005" name="Nature">
        <title>The DNA sequence of the human X chromosome.</title>
        <authorList>
            <person name="Ross M.T."/>
            <person name="Grafham D.V."/>
            <person name="Coffey A.J."/>
            <person name="Scherer S."/>
            <person name="McLay K."/>
            <person name="Muzny D."/>
            <person name="Platzer M."/>
            <person name="Howell G.R."/>
            <person name="Burrows C."/>
            <person name="Bird C.P."/>
            <person name="Frankish A."/>
            <person name="Lovell F.L."/>
            <person name="Howe K.L."/>
            <person name="Ashurst J.L."/>
            <person name="Fulton R.S."/>
            <person name="Sudbrak R."/>
            <person name="Wen G."/>
            <person name="Jones M.C."/>
            <person name="Hurles M.E."/>
            <person name="Andrews T.D."/>
            <person name="Scott C.E."/>
            <person name="Searle S."/>
            <person name="Ramser J."/>
            <person name="Whittaker A."/>
            <person name="Deadman R."/>
            <person name="Carter N.P."/>
            <person name="Hunt S.E."/>
            <person name="Chen R."/>
            <person name="Cree A."/>
            <person name="Gunaratne P."/>
            <person name="Havlak P."/>
            <person name="Hodgson A."/>
            <person name="Metzker M.L."/>
            <person name="Richards S."/>
            <person name="Scott G."/>
            <person name="Steffen D."/>
            <person name="Sodergren E."/>
            <person name="Wheeler D.A."/>
            <person name="Worley K.C."/>
            <person name="Ainscough R."/>
            <person name="Ambrose K.D."/>
            <person name="Ansari-Lari M.A."/>
            <person name="Aradhya S."/>
            <person name="Ashwell R.I."/>
            <person name="Babbage A.K."/>
            <person name="Bagguley C.L."/>
            <person name="Ballabio A."/>
            <person name="Banerjee R."/>
            <person name="Barker G.E."/>
            <person name="Barlow K.F."/>
            <person name="Barrett I.P."/>
            <person name="Bates K.N."/>
            <person name="Beare D.M."/>
            <person name="Beasley H."/>
            <person name="Beasley O."/>
            <person name="Beck A."/>
            <person name="Bethel G."/>
            <person name="Blechschmidt K."/>
            <person name="Brady N."/>
            <person name="Bray-Allen S."/>
            <person name="Bridgeman A.M."/>
            <person name="Brown A.J."/>
            <person name="Brown M.J."/>
            <person name="Bonnin D."/>
            <person name="Bruford E.A."/>
            <person name="Buhay C."/>
            <person name="Burch P."/>
            <person name="Burford D."/>
            <person name="Burgess J."/>
            <person name="Burrill W."/>
            <person name="Burton J."/>
            <person name="Bye J.M."/>
            <person name="Carder C."/>
            <person name="Carrel L."/>
            <person name="Chako J."/>
            <person name="Chapman J.C."/>
            <person name="Chavez D."/>
            <person name="Chen E."/>
            <person name="Chen G."/>
            <person name="Chen Y."/>
            <person name="Chen Z."/>
            <person name="Chinault C."/>
            <person name="Ciccodicola A."/>
            <person name="Clark S.Y."/>
            <person name="Clarke G."/>
            <person name="Clee C.M."/>
            <person name="Clegg S."/>
            <person name="Clerc-Blankenburg K."/>
            <person name="Clifford K."/>
            <person name="Cobley V."/>
            <person name="Cole C.G."/>
            <person name="Conquer J.S."/>
            <person name="Corby N."/>
            <person name="Connor R.E."/>
            <person name="David R."/>
            <person name="Davies J."/>
            <person name="Davis C."/>
            <person name="Davis J."/>
            <person name="Delgado O."/>
            <person name="Deshazo D."/>
            <person name="Dhami P."/>
            <person name="Ding Y."/>
            <person name="Dinh H."/>
            <person name="Dodsworth S."/>
            <person name="Draper H."/>
            <person name="Dugan-Rocha S."/>
            <person name="Dunham A."/>
            <person name="Dunn M."/>
            <person name="Durbin K.J."/>
            <person name="Dutta I."/>
            <person name="Eades T."/>
            <person name="Ellwood M."/>
            <person name="Emery-Cohen A."/>
            <person name="Errington H."/>
            <person name="Evans K.L."/>
            <person name="Faulkner L."/>
            <person name="Francis F."/>
            <person name="Frankland J."/>
            <person name="Fraser A.E."/>
            <person name="Galgoczy P."/>
            <person name="Gilbert J."/>
            <person name="Gill R."/>
            <person name="Gloeckner G."/>
            <person name="Gregory S.G."/>
            <person name="Gribble S."/>
            <person name="Griffiths C."/>
            <person name="Grocock R."/>
            <person name="Gu Y."/>
            <person name="Gwilliam R."/>
            <person name="Hamilton C."/>
            <person name="Hart E.A."/>
            <person name="Hawes A."/>
            <person name="Heath P.D."/>
            <person name="Heitmann K."/>
            <person name="Hennig S."/>
            <person name="Hernandez J."/>
            <person name="Hinzmann B."/>
            <person name="Ho S."/>
            <person name="Hoffs M."/>
            <person name="Howden P.J."/>
            <person name="Huckle E.J."/>
            <person name="Hume J."/>
            <person name="Hunt P.J."/>
            <person name="Hunt A.R."/>
            <person name="Isherwood J."/>
            <person name="Jacob L."/>
            <person name="Johnson D."/>
            <person name="Jones S."/>
            <person name="de Jong P.J."/>
            <person name="Joseph S.S."/>
            <person name="Keenan S."/>
            <person name="Kelly S."/>
            <person name="Kershaw J.K."/>
            <person name="Khan Z."/>
            <person name="Kioschis P."/>
            <person name="Klages S."/>
            <person name="Knights A.J."/>
            <person name="Kosiura A."/>
            <person name="Kovar-Smith C."/>
            <person name="Laird G.K."/>
            <person name="Langford C."/>
            <person name="Lawlor S."/>
            <person name="Leversha M."/>
            <person name="Lewis L."/>
            <person name="Liu W."/>
            <person name="Lloyd C."/>
            <person name="Lloyd D.M."/>
            <person name="Loulseged H."/>
            <person name="Loveland J.E."/>
            <person name="Lovell J.D."/>
            <person name="Lozado R."/>
            <person name="Lu J."/>
            <person name="Lyne R."/>
            <person name="Ma J."/>
            <person name="Maheshwari M."/>
            <person name="Matthews L.H."/>
            <person name="McDowall J."/>
            <person name="McLaren S."/>
            <person name="McMurray A."/>
            <person name="Meidl P."/>
            <person name="Meitinger T."/>
            <person name="Milne S."/>
            <person name="Miner G."/>
            <person name="Mistry S.L."/>
            <person name="Morgan M."/>
            <person name="Morris S."/>
            <person name="Mueller I."/>
            <person name="Mullikin J.C."/>
            <person name="Nguyen N."/>
            <person name="Nordsiek G."/>
            <person name="Nyakatura G."/>
            <person name="O'dell C.N."/>
            <person name="Okwuonu G."/>
            <person name="Palmer S."/>
            <person name="Pandian R."/>
            <person name="Parker D."/>
            <person name="Parrish J."/>
            <person name="Pasternak S."/>
            <person name="Patel D."/>
            <person name="Pearce A.V."/>
            <person name="Pearson D.M."/>
            <person name="Pelan S.E."/>
            <person name="Perez L."/>
            <person name="Porter K.M."/>
            <person name="Ramsey Y."/>
            <person name="Reichwald K."/>
            <person name="Rhodes S."/>
            <person name="Ridler K.A."/>
            <person name="Schlessinger D."/>
            <person name="Schueler M.G."/>
            <person name="Sehra H.K."/>
            <person name="Shaw-Smith C."/>
            <person name="Shen H."/>
            <person name="Sheridan E.M."/>
            <person name="Shownkeen R."/>
            <person name="Skuce C.D."/>
            <person name="Smith M.L."/>
            <person name="Sotheran E.C."/>
            <person name="Steingruber H.E."/>
            <person name="Steward C.A."/>
            <person name="Storey R."/>
            <person name="Swann R.M."/>
            <person name="Swarbreck D."/>
            <person name="Tabor P.E."/>
            <person name="Taudien S."/>
            <person name="Taylor T."/>
            <person name="Teague B."/>
            <person name="Thomas K."/>
            <person name="Thorpe A."/>
            <person name="Timms K."/>
            <person name="Tracey A."/>
            <person name="Trevanion S."/>
            <person name="Tromans A.C."/>
            <person name="d'Urso M."/>
            <person name="Verduzco D."/>
            <person name="Villasana D."/>
            <person name="Waldron L."/>
            <person name="Wall M."/>
            <person name="Wang Q."/>
            <person name="Warren J."/>
            <person name="Warry G.L."/>
            <person name="Wei X."/>
            <person name="West A."/>
            <person name="Whitehead S.L."/>
            <person name="Whiteley M.N."/>
            <person name="Wilkinson J.E."/>
            <person name="Willey D.L."/>
            <person name="Williams G."/>
            <person name="Williams L."/>
            <person name="Williamson A."/>
            <person name="Williamson H."/>
            <person name="Wilming L."/>
            <person name="Woodmansey R.L."/>
            <person name="Wray P.W."/>
            <person name="Yen J."/>
            <person name="Zhang J."/>
            <person name="Zhou J."/>
            <person name="Zoghbi H."/>
            <person name="Zorilla S."/>
            <person name="Buck D."/>
            <person name="Reinhardt R."/>
            <person name="Poustka A."/>
            <person name="Rosenthal A."/>
            <person name="Lehrach H."/>
            <person name="Meindl A."/>
            <person name="Minx P.J."/>
            <person name="Hillier L.W."/>
            <person name="Willard H.F."/>
            <person name="Wilson R.K."/>
            <person name="Waterston R.H."/>
            <person name="Rice C.M."/>
            <person name="Vaudin M."/>
            <person name="Coulson A."/>
            <person name="Nelson D.L."/>
            <person name="Weinstock G."/>
            <person name="Sulston J.E."/>
            <person name="Durbin R.M."/>
            <person name="Hubbard T."/>
            <person name="Gibbs R.A."/>
            <person name="Beck S."/>
            <person name="Rogers J."/>
            <person name="Bentley D.R."/>
        </authorList>
    </citation>
    <scope>NUCLEOTIDE SEQUENCE [LARGE SCALE GENOMIC DNA]</scope>
</reference>
<reference key="3">
    <citation type="journal article" date="2004" name="Genome Res.">
        <title>The status, quality, and expansion of the NIH full-length cDNA project: the Mammalian Gene Collection (MGC).</title>
        <authorList>
            <consortium name="The MGC Project Team"/>
        </authorList>
    </citation>
    <scope>NUCLEOTIDE SEQUENCE [LARGE SCALE MRNA] (ISOFORM 1)</scope>
    <source>
        <tissue>Testis</tissue>
    </source>
</reference>
<reference key="4">
    <citation type="journal article" date="2007" name="BMC Genomics">
        <title>The full-ORF clone resource of the German cDNA consortium.</title>
        <authorList>
            <person name="Bechtel S."/>
            <person name="Rosenfelder H."/>
            <person name="Duda A."/>
            <person name="Schmidt C.P."/>
            <person name="Ernst U."/>
            <person name="Wellenreuther R."/>
            <person name="Mehrle A."/>
            <person name="Schuster C."/>
            <person name="Bahr A."/>
            <person name="Bloecker H."/>
            <person name="Heubner D."/>
            <person name="Hoerlein A."/>
            <person name="Michel G."/>
            <person name="Wedler H."/>
            <person name="Koehrer K."/>
            <person name="Ottenwaelder B."/>
            <person name="Poustka A."/>
            <person name="Wiemann S."/>
            <person name="Schupp I."/>
        </authorList>
    </citation>
    <scope>NUCLEOTIDE SEQUENCE [LARGE SCALE MRNA] OF 215-749 (ISOFORM 1)</scope>
    <source>
        <tissue>Small intestine</tissue>
    </source>
</reference>
<reference key="5">
    <citation type="submission" date="2007-11" db="PDB data bank">
        <title>Crystal structure of the N-terminal DUF1126 in human EF-hand domain containing 2 protein.</title>
        <authorList>
            <consortium name="RIKEN structural genomics initiative (RSGI)"/>
        </authorList>
    </citation>
    <scope>X-RAY CRYSTALLOGRAPHY (1.68 ANGSTROMS) OF 71-190</scope>
</reference>
<reference evidence="9" key="6">
    <citation type="journal article" date="2022" name="Proc. Natl. Acad. Sci. U.S.A.">
        <title>SPACA9 is a lumenal protein of human ciliary singlet and doublet microtubules.</title>
        <authorList>
            <person name="Gui M."/>
            <person name="Croft J.T."/>
            <person name="Zabeo D."/>
            <person name="Acharya V."/>
            <person name="Kollman J.M."/>
            <person name="Burgoyne T."/>
            <person name="Hoog J.L."/>
            <person name="Brown A."/>
        </authorList>
    </citation>
    <scope>STRUCTURE BY ELECTRON MICROSCOPY (3.60 ANGSTROMS)</scope>
    <scope>FUNCTION</scope>
    <scope>SUBCELLULAR LOCATION</scope>
    <scope>TISSUE SPECIFICITY</scope>
</reference>
<reference key="7">
    <citation type="journal article" date="2005" name="Epilepsy Res.">
        <title>A new EF-hand containing gene EFHC2 on Xp11.4: tentative evidence for association with juvenile myoclonic epilepsy.</title>
        <authorList>
            <person name="Gu W."/>
            <person name="Sander T."/>
            <person name="Heils A."/>
            <person name="Lenzen K.P."/>
            <person name="Steinlein O.K."/>
        </authorList>
    </citation>
    <scope>VARIANT TYR-430</scope>
</reference>
<accession>Q5JST6</accession>
<accession>Q5JST8</accession>
<accession>Q68DK4</accession>
<accession>Q8NEI0</accession>
<accession>Q9H653</accession>
<name>EFHC2_HUMAN</name>
<keyword id="KW-0002">3D-structure</keyword>
<keyword id="KW-0025">Alternative splicing</keyword>
<keyword id="KW-0966">Cell projection</keyword>
<keyword id="KW-0969">Cilium</keyword>
<keyword id="KW-0963">Cytoplasm</keyword>
<keyword id="KW-0206">Cytoskeleton</keyword>
<keyword id="KW-0282">Flagellum</keyword>
<keyword id="KW-1267">Proteomics identification</keyword>
<keyword id="KW-1185">Reference proteome</keyword>
<keyword id="KW-0677">Repeat</keyword>
<feature type="chain" id="PRO_0000251703" description="EF-hand domain-containing family member C2">
    <location>
        <begin position="1"/>
        <end position="749"/>
    </location>
</feature>
<feature type="domain" description="DM10 1" evidence="3">
    <location>
        <begin position="75"/>
        <end position="182"/>
    </location>
</feature>
<feature type="domain" description="DM10 2" evidence="3">
    <location>
        <begin position="226"/>
        <end position="368"/>
    </location>
</feature>
<feature type="domain" description="DM10 3" evidence="3">
    <location>
        <begin position="431"/>
        <end position="538"/>
    </location>
</feature>
<feature type="domain" description="EF-hand" evidence="2">
    <location>
        <begin position="558"/>
        <end position="593"/>
    </location>
</feature>
<feature type="splice variant" id="VSP_020766" description="In isoform 2." evidence="6">
    <location>
        <begin position="1"/>
        <end position="587"/>
    </location>
</feature>
<feature type="sequence variant" id="VAR_027698" description="In dbSNP:rs17146914.">
    <original>N</original>
    <variation>S</variation>
    <location>
        <position position="31"/>
    </location>
</feature>
<feature type="sequence variant" id="VAR_061086" description="In dbSNP:rs61636783.">
    <original>C</original>
    <variation>Y</variation>
    <location>
        <position position="57"/>
    </location>
</feature>
<feature type="sequence variant" id="VAR_027699" description="In dbSNP:rs7062352.">
    <original>E</original>
    <variation>K</variation>
    <location>
        <position position="208"/>
    </location>
</feature>
<feature type="sequence variant" id="VAR_027700" description="In dbSNP:rs2208592." evidence="4">
    <original>S</original>
    <variation>Y</variation>
    <location>
        <position position="430"/>
    </location>
</feature>
<feature type="sequence variant" id="VAR_027701" description="In dbSNP:rs3747354.">
    <original>E</original>
    <variation>Q</variation>
    <location>
        <position position="507"/>
    </location>
</feature>
<feature type="sequence conflict" description="In Ref. 4; CAH18216." evidence="7" ref="4">
    <original>L</original>
    <variation>F</variation>
    <location>
        <position position="266"/>
    </location>
</feature>
<feature type="sequence conflict" description="In Ref. 4; CAH18216." evidence="7" ref="4">
    <original>CV</original>
    <variation>W</variation>
    <location>
        <begin position="643"/>
        <end position="644"/>
    </location>
</feature>
<feature type="sequence conflict" description="In Ref. 1; BAB15413." evidence="7" ref="1">
    <original>V</original>
    <variation>A</variation>
    <location>
        <position position="705"/>
    </location>
</feature>
<feature type="strand" evidence="10">
    <location>
        <begin position="79"/>
        <end position="91"/>
    </location>
</feature>
<feature type="strand" evidence="10">
    <location>
        <begin position="94"/>
        <end position="107"/>
    </location>
</feature>
<feature type="turn" evidence="10">
    <location>
        <begin position="108"/>
        <end position="111"/>
    </location>
</feature>
<feature type="strand" evidence="10">
    <location>
        <begin position="112"/>
        <end position="116"/>
    </location>
</feature>
<feature type="strand" evidence="10">
    <location>
        <begin position="128"/>
        <end position="134"/>
    </location>
</feature>
<feature type="helix" evidence="10">
    <location>
        <begin position="149"/>
        <end position="151"/>
    </location>
</feature>
<feature type="strand" evidence="10">
    <location>
        <begin position="157"/>
        <end position="160"/>
    </location>
</feature>
<feature type="strand" evidence="10">
    <location>
        <begin position="163"/>
        <end position="170"/>
    </location>
</feature>
<feature type="helix" evidence="10">
    <location>
        <begin position="172"/>
        <end position="180"/>
    </location>
</feature>
<comment type="function">
    <text evidence="5">Microtubule inner protein (MIP) part of the dynein-decorated doublet microtubules (DMTs) in cilia axoneme, which is required for motile cilia beating.</text>
</comment>
<comment type="subunit">
    <text evidence="1">Microtubule inner protein component of sperm flagellar doublet microtubules.</text>
</comment>
<comment type="interaction">
    <interactant intactId="EBI-2349927">
        <id>Q5JST6</id>
    </interactant>
    <interactant intactId="EBI-740884">
        <id>Q9NRN7</id>
        <label>AASDHPPT</label>
    </interactant>
    <organismsDiffer>false</organismsDiffer>
    <experiments>3</experiments>
</comment>
<comment type="interaction">
    <interactant intactId="EBI-2349927">
        <id>Q5JST6</id>
    </interactant>
    <interactant intactId="EBI-602199">
        <id>Q12774</id>
        <label>ARHGEF5</label>
    </interactant>
    <organismsDiffer>false</organismsDiffer>
    <experiments>6</experiments>
</comment>
<comment type="interaction">
    <interactant intactId="EBI-2349927">
        <id>Q5JST6</id>
    </interactant>
    <interactant intactId="EBI-742909">
        <id>Q9H6L4</id>
        <label>ARMC7</label>
    </interactant>
    <organismsDiffer>false</organismsDiffer>
    <experiments>3</experiments>
</comment>
<comment type="interaction">
    <interactant intactId="EBI-2349927">
        <id>Q5JST6</id>
    </interactant>
    <interactant intactId="EBI-745689">
        <id>Q7L5A3</id>
        <label>ATOSB</label>
    </interactant>
    <organismsDiffer>false</organismsDiffer>
    <experiments>3</experiments>
</comment>
<comment type="interaction">
    <interactant intactId="EBI-2349927">
        <id>Q5JST6</id>
    </interactant>
    <interactant intactId="EBI-12011224">
        <id>Q9NPB3</id>
        <label>CABP2</label>
    </interactant>
    <organismsDiffer>false</organismsDiffer>
    <experiments>3</experiments>
</comment>
<comment type="interaction">
    <interactant intactId="EBI-2349927">
        <id>Q5JST6</id>
    </interactant>
    <interactant intactId="EBI-714838">
        <id>O00305</id>
        <label>CACNB4</label>
    </interactant>
    <organismsDiffer>false</organismsDiffer>
    <experiments>6</experiments>
</comment>
<comment type="interaction">
    <interactant intactId="EBI-2349927">
        <id>Q5JST6</id>
    </interactant>
    <interactant intactId="EBI-11530605">
        <id>Q9H257-2</id>
        <label>CARD9</label>
    </interactant>
    <organismsDiffer>false</organismsDiffer>
    <experiments>3</experiments>
</comment>
<comment type="interaction">
    <interactant intactId="EBI-2349927">
        <id>Q5JST6</id>
    </interactant>
    <interactant intactId="EBI-10171570">
        <id>Q68D86</id>
        <label>CCDC102B</label>
    </interactant>
    <organismsDiffer>false</organismsDiffer>
    <experiments>3</experiments>
</comment>
<comment type="interaction">
    <interactant intactId="EBI-2349927">
        <id>Q5JST6</id>
    </interactant>
    <interactant intactId="EBI-744556">
        <id>Q96HB5</id>
        <label>CCDC120</label>
    </interactant>
    <organismsDiffer>false</organismsDiffer>
    <experiments>3</experiments>
</comment>
<comment type="interaction">
    <interactant intactId="EBI-2349927">
        <id>Q5JST6</id>
    </interactant>
    <interactant intactId="EBI-10185348">
        <id>Q96HB5-4</id>
        <label>CCDC120</label>
    </interactant>
    <organismsDiffer>false</organismsDiffer>
    <experiments>4</experiments>
</comment>
<comment type="interaction">
    <interactant intactId="EBI-2349927">
        <id>Q5JST6</id>
    </interactant>
    <interactant intactId="EBI-10961312">
        <id>Q8IYE1</id>
        <label>CCDC13</label>
    </interactant>
    <organismsDiffer>false</organismsDiffer>
    <experiments>3</experiments>
</comment>
<comment type="interaction">
    <interactant intactId="EBI-2349927">
        <id>Q5JST6</id>
    </interactant>
    <interactant intactId="EBI-10961624">
        <id>Q2TAC2-2</id>
        <label>CCDC57</label>
    </interactant>
    <organismsDiffer>false</organismsDiffer>
    <experiments>3</experiments>
</comment>
<comment type="interaction">
    <interactant intactId="EBI-2349927">
        <id>Q5JST6</id>
    </interactant>
    <interactant intactId="EBI-10175300">
        <id>Q8TD31-3</id>
        <label>CCHCR1</label>
    </interactant>
    <organismsDiffer>false</organismsDiffer>
    <experiments>6</experiments>
</comment>
<comment type="interaction">
    <interactant intactId="EBI-2349927">
        <id>Q5JST6</id>
    </interactant>
    <interactant intactId="EBI-10192241">
        <id>O95833</id>
        <label>CLIC3</label>
    </interactant>
    <organismsDiffer>false</organismsDiffer>
    <experiments>4</experiments>
</comment>
<comment type="interaction">
    <interactant intactId="EBI-2349927">
        <id>Q5JST6</id>
    </interactant>
    <interactant intactId="EBI-711301">
        <id>O14579</id>
        <label>COPE</label>
    </interactant>
    <organismsDiffer>false</organismsDiffer>
    <experiments>6</experiments>
</comment>
<comment type="interaction">
    <interactant intactId="EBI-2349927">
        <id>Q5JST6</id>
    </interactant>
    <interactant intactId="EBI-7097057">
        <id>Q96FN4</id>
        <label>CPNE2</label>
    </interactant>
    <organismsDiffer>false</organismsDiffer>
    <experiments>3</experiments>
</comment>
<comment type="interaction">
    <interactant intactId="EBI-2349927">
        <id>Q5JST6</id>
    </interactant>
    <interactant intactId="EBI-12012272">
        <id>Q9UBL6-2</id>
        <label>CPNE7</label>
    </interactant>
    <organismsDiffer>false</organismsDiffer>
    <experiments>3</experiments>
</comment>
<comment type="interaction">
    <interactant intactId="EBI-2349927">
        <id>Q5JST6</id>
    </interactant>
    <interactant intactId="EBI-12324841">
        <id>O15075-2</id>
        <label>DCLK1</label>
    </interactant>
    <organismsDiffer>false</organismsDiffer>
    <experiments>3</experiments>
</comment>
<comment type="interaction">
    <interactant intactId="EBI-2349927">
        <id>Q5JST6</id>
    </interactant>
    <interactant intactId="EBI-351257">
        <id>P26196</id>
        <label>DDX6</label>
    </interactant>
    <organismsDiffer>false</organismsDiffer>
    <experiments>3</experiments>
</comment>
<comment type="interaction">
    <interactant intactId="EBI-2349927">
        <id>Q5JST6</id>
    </interactant>
    <interactant intactId="EBI-10262896">
        <id>Q8IY82</id>
        <label>DRC7</label>
    </interactant>
    <organismsDiffer>false</organismsDiffer>
    <experiments>3</experiments>
</comment>
<comment type="interaction">
    <interactant intactId="EBI-2349927">
        <id>Q5JST6</id>
    </interactant>
    <interactant intactId="EBI-997311">
        <id>Q96F86</id>
        <label>EDC3</label>
    </interactant>
    <organismsDiffer>false</organismsDiffer>
    <experiments>7</experiments>
</comment>
<comment type="interaction">
    <interactant intactId="EBI-2349927">
        <id>Q5JST6</id>
    </interactant>
    <interactant intactId="EBI-743105">
        <id>Q5JVL4</id>
        <label>EFHC1</label>
    </interactant>
    <organismsDiffer>false</organismsDiffer>
    <experiments>6</experiments>
</comment>
<comment type="interaction">
    <interactant intactId="EBI-2349927">
        <id>Q5JST6</id>
    </interactant>
    <interactant intactId="EBI-1175354">
        <id>Q9H6Z9</id>
        <label>EGLN3</label>
    </interactant>
    <organismsDiffer>false</organismsDiffer>
    <experiments>3</experiments>
</comment>
<comment type="interaction">
    <interactant intactId="EBI-2349927">
        <id>Q5JST6</id>
    </interactant>
    <interactant intactId="EBI-489887">
        <id>P50402</id>
        <label>EMD</label>
    </interactant>
    <organismsDiffer>false</organismsDiffer>
    <experiments>3</experiments>
</comment>
<comment type="interaction">
    <interactant intactId="EBI-2349927">
        <id>Q5JST6</id>
    </interactant>
    <interactant intactId="EBI-744099">
        <id>Q9H0I2</id>
        <label>ENKD1</label>
    </interactant>
    <organismsDiffer>false</organismsDiffer>
    <experiments>3</experiments>
</comment>
<comment type="interaction">
    <interactant intactId="EBI-2349927">
        <id>Q5JST6</id>
    </interactant>
    <interactant intactId="EBI-12001340">
        <id>P62508-3</id>
        <label>ESRRG</label>
    </interactant>
    <organismsDiffer>false</organismsDiffer>
    <experiments>3</experiments>
</comment>
<comment type="interaction">
    <interactant intactId="EBI-2349927">
        <id>Q5JST6</id>
    </interactant>
    <interactant intactId="EBI-371876">
        <id>Q9NQT4</id>
        <label>EXOSC5</label>
    </interactant>
    <organismsDiffer>false</organismsDiffer>
    <experiments>3</experiments>
</comment>
<comment type="interaction">
    <interactant intactId="EBI-2349927">
        <id>Q5JST6</id>
    </interactant>
    <interactant intactId="EBI-11986315">
        <id>Q9H5Z6-2</id>
        <label>FAM124B</label>
    </interactant>
    <organismsDiffer>false</organismsDiffer>
    <experiments>3</experiments>
</comment>
<comment type="interaction">
    <interactant intactId="EBI-2349927">
        <id>Q5JST6</id>
    </interactant>
    <interactant intactId="EBI-12006844">
        <id>A6H8Z2</id>
        <label>FAM221B</label>
    </interactant>
    <organismsDiffer>false</organismsDiffer>
    <experiments>3</experiments>
</comment>
<comment type="interaction">
    <interactant intactId="EBI-2349927">
        <id>Q5JST6</id>
    </interactant>
    <interactant intactId="EBI-11959077">
        <id>Q6PCT2-2</id>
        <label>FBXL19</label>
    </interactant>
    <organismsDiffer>false</organismsDiffer>
    <experiments>3</experiments>
</comment>
<comment type="interaction">
    <interactant intactId="EBI-2349927">
        <id>Q5JST6</id>
    </interactant>
    <interactant intactId="EBI-744104">
        <id>P55040</id>
        <label>GEM</label>
    </interactant>
    <organismsDiffer>false</organismsDiffer>
    <experiments>3</experiments>
</comment>
<comment type="interaction">
    <interactant intactId="EBI-2349927">
        <id>Q5JST6</id>
    </interactant>
    <interactant intactId="EBI-748515">
        <id>Q8IVS8</id>
        <label>GLYCTK</label>
    </interactant>
    <organismsDiffer>false</organismsDiffer>
    <experiments>3</experiments>
</comment>
<comment type="interaction">
    <interactant intactId="EBI-2349927">
        <id>Q5JST6</id>
    </interactant>
    <interactant intactId="EBI-6164177">
        <id>Q92805</id>
        <label>GOLGA1</label>
    </interactant>
    <organismsDiffer>false</organismsDiffer>
    <experiments>3</experiments>
</comment>
<comment type="interaction">
    <interactant intactId="EBI-2349927">
        <id>Q5JST6</id>
    </interactant>
    <interactant intactId="EBI-746309">
        <id>Q92917</id>
        <label>GPKOW</label>
    </interactant>
    <organismsDiffer>false</organismsDiffer>
    <experiments>3</experiments>
</comment>
<comment type="interaction">
    <interactant intactId="EBI-2349927">
        <id>Q5JST6</id>
    </interactant>
    <interactant intactId="EBI-401755">
        <id>P62993</id>
        <label>GRB2</label>
    </interactant>
    <organismsDiffer>false</organismsDiffer>
    <experiments>3</experiments>
</comment>
<comment type="interaction">
    <interactant intactId="EBI-2349927">
        <id>Q5JST6</id>
    </interactant>
    <interactant intactId="EBI-740553">
        <id>P13807</id>
        <label>GYS1</label>
    </interactant>
    <organismsDiffer>false</organismsDiffer>
    <experiments>3</experiments>
</comment>
<comment type="interaction">
    <interactant intactId="EBI-2349927">
        <id>Q5JST6</id>
    </interactant>
    <interactant intactId="EBI-11953488">
        <id>P56524-2</id>
        <label>HDAC4</label>
    </interactant>
    <organismsDiffer>false</organismsDiffer>
    <experiments>3</experiments>
</comment>
<comment type="interaction">
    <interactant intactId="EBI-2349927">
        <id>Q5JST6</id>
    </interactant>
    <interactant intactId="EBI-740220">
        <id>O14964</id>
        <label>HGS</label>
    </interactant>
    <organismsDiffer>false</organismsDiffer>
    <experiments>3</experiments>
</comment>
<comment type="interaction">
    <interactant intactId="EBI-2349927">
        <id>Q5JST6</id>
    </interactant>
    <interactant intactId="EBI-10236940">
        <id>Q15735</id>
        <label>INPP5J</label>
    </interactant>
    <organismsDiffer>false</organismsDiffer>
    <experiments>3</experiments>
</comment>
<comment type="interaction">
    <interactant intactId="EBI-2349927">
        <id>Q5JST6</id>
    </interactant>
    <interactant intactId="EBI-752007">
        <id>Q96AA8</id>
        <label>JAKMIP2</label>
    </interactant>
    <organismsDiffer>false</organismsDiffer>
    <experiments>3</experiments>
</comment>
<comment type="interaction">
    <interactant intactId="EBI-2349927">
        <id>Q5JST6</id>
    </interactant>
    <interactant intactId="EBI-2556193">
        <id>Q63ZY3</id>
        <label>KANK2</label>
    </interactant>
    <organismsDiffer>false</organismsDiffer>
    <experiments>3</experiments>
</comment>
<comment type="interaction">
    <interactant intactId="EBI-2349927">
        <id>Q5JST6</id>
    </interactant>
    <interactant intactId="EBI-11954971">
        <id>Q96MP8-2</id>
        <label>KCTD7</label>
    </interactant>
    <organismsDiffer>false</organismsDiffer>
    <experiments>3</experiments>
</comment>
<comment type="interaction">
    <interactant intactId="EBI-2349927">
        <id>Q5JST6</id>
    </interactant>
    <interactant intactId="EBI-739909">
        <id>Q969R5</id>
        <label>L3MBTL2</label>
    </interactant>
    <organismsDiffer>false</organismsDiffer>
    <experiments>3</experiments>
</comment>
<comment type="interaction">
    <interactant intactId="EBI-2349927">
        <id>Q5JST6</id>
    </interactant>
    <interactant intactId="EBI-2830427">
        <id>Q03252</id>
        <label>LMNB2</label>
    </interactant>
    <organismsDiffer>false</organismsDiffer>
    <experiments>3</experiments>
</comment>
<comment type="interaction">
    <interactant intactId="EBI-2349927">
        <id>Q5JST6</id>
    </interactant>
    <interactant intactId="EBI-11959475">
        <id>P25791-3</id>
        <label>LMO2</label>
    </interactant>
    <organismsDiffer>false</organismsDiffer>
    <experiments>3</experiments>
</comment>
<comment type="interaction">
    <interactant intactId="EBI-2349927">
        <id>Q5JST6</id>
    </interactant>
    <interactant intactId="EBI-739832">
        <id>Q8TBB1</id>
        <label>LNX1</label>
    </interactant>
    <organismsDiffer>false</organismsDiffer>
    <experiments>3</experiments>
</comment>
<comment type="interaction">
    <interactant intactId="EBI-2349927">
        <id>Q5JST6</id>
    </interactant>
    <interactant intactId="EBI-2341787">
        <id>Q17RB8</id>
        <label>LONRF1</label>
    </interactant>
    <organismsDiffer>false</organismsDiffer>
    <experiments>6</experiments>
</comment>
<comment type="interaction">
    <interactant intactId="EBI-2349927">
        <id>Q5JST6</id>
    </interactant>
    <interactant intactId="EBI-746778">
        <id>Q96A72</id>
        <label>MAGOHB</label>
    </interactant>
    <organismsDiffer>false</organismsDiffer>
    <experiments>3</experiments>
</comment>
<comment type="interaction">
    <interactant intactId="EBI-2349927">
        <id>Q5JST6</id>
    </interactant>
    <interactant intactId="EBI-713568">
        <id>P45984</id>
        <label>MAPK9</label>
    </interactant>
    <organismsDiffer>false</organismsDiffer>
    <experiments>7</experiments>
</comment>
<comment type="interaction">
    <interactant intactId="EBI-2349927">
        <id>Q5JST6</id>
    </interactant>
    <interactant intactId="EBI-10172526">
        <id>Q9UJV3-2</id>
        <label>MID2</label>
    </interactant>
    <organismsDiffer>false</organismsDiffer>
    <experiments>3</experiments>
</comment>
<comment type="interaction">
    <interactant intactId="EBI-2349927">
        <id>Q5JST6</id>
    </interactant>
    <interactant intactId="EBI-2555085">
        <id>Q8IVT2</id>
        <label>MISP</label>
    </interactant>
    <organismsDiffer>false</organismsDiffer>
    <experiments>3</experiments>
</comment>
<comment type="interaction">
    <interactant intactId="EBI-2349927">
        <id>Q5JST6</id>
    </interactant>
    <interactant intactId="EBI-14083835">
        <id>O94964-4</id>
        <label>MTCL2</label>
    </interactant>
    <organismsDiffer>false</organismsDiffer>
    <experiments>3</experiments>
</comment>
<comment type="interaction">
    <interactant intactId="EBI-2349927">
        <id>Q5JST6</id>
    </interactant>
    <interactant intactId="EBI-6952711">
        <id>Q8WY64</id>
        <label>MYLIP</label>
    </interactant>
    <organismsDiffer>false</organismsDiffer>
    <experiments>3</experiments>
</comment>
<comment type="interaction">
    <interactant intactId="EBI-2349927">
        <id>Q5JST6</id>
    </interactant>
    <interactant intactId="EBI-14093244">
        <id>Q9ULV0-2</id>
        <label>MYO5B</label>
    </interactant>
    <organismsDiffer>false</organismsDiffer>
    <experiments>3</experiments>
</comment>
<comment type="interaction">
    <interactant intactId="EBI-2349927">
        <id>Q5JST6</id>
    </interactant>
    <interactant intactId="EBI-1053490">
        <id>Q9UBB6</id>
        <label>NCDN</label>
    </interactant>
    <organismsDiffer>false</organismsDiffer>
    <experiments>6</experiments>
</comment>
<comment type="interaction">
    <interactant intactId="EBI-2349927">
        <id>Q5JST6</id>
    </interactant>
    <interactant intactId="EBI-713635">
        <id>O43639</id>
        <label>NCK2</label>
    </interactant>
    <organismsDiffer>false</organismsDiffer>
    <experiments>3</experiments>
</comment>
<comment type="interaction">
    <interactant intactId="EBI-2349927">
        <id>Q5JST6</id>
    </interactant>
    <interactant intactId="EBI-10249760">
        <id>Q9UHB4</id>
        <label>NDOR1</label>
    </interactant>
    <organismsDiffer>false</organismsDiffer>
    <experiments>3</experiments>
</comment>
<comment type="interaction">
    <interactant intactId="EBI-2349927">
        <id>Q5JST6</id>
    </interactant>
    <interactant intactId="EBI-11750983">
        <id>Q9HC98-4</id>
        <label>NEK6</label>
    </interactant>
    <organismsDiffer>false</organismsDiffer>
    <experiments>3</experiments>
</comment>
<comment type="interaction">
    <interactant intactId="EBI-2349927">
        <id>Q5JST6</id>
    </interactant>
    <interactant intactId="EBI-10271199">
        <id>Q8NI38</id>
        <label>NFKBID</label>
    </interactant>
    <organismsDiffer>false</organismsDiffer>
    <experiments>3</experiments>
</comment>
<comment type="interaction">
    <interactant intactId="EBI-2349927">
        <id>Q5JST6</id>
    </interactant>
    <interactant intactId="EBI-744782">
        <id>Q9Y5B8</id>
        <label>NME7</label>
    </interactant>
    <organismsDiffer>false</organismsDiffer>
    <experiments>3</experiments>
</comment>
<comment type="interaction">
    <interactant intactId="EBI-2349927">
        <id>Q5JST6</id>
    </interactant>
    <interactant intactId="EBI-750589">
        <id>P30039</id>
        <label>PBLD</label>
    </interactant>
    <organismsDiffer>false</organismsDiffer>
    <experiments>7</experiments>
</comment>
<comment type="interaction">
    <interactant intactId="EBI-2349927">
        <id>Q5JST6</id>
    </interactant>
    <interactant intactId="EBI-530034">
        <id>O43189</id>
        <label>PHF1</label>
    </interactant>
    <organismsDiffer>false</organismsDiffer>
    <experiments>3</experiments>
</comment>
<comment type="interaction">
    <interactant intactId="EBI-2349927">
        <id>Q5JST6</id>
    </interactant>
    <interactant intactId="EBI-14066006">
        <id>Q4G0R1</id>
        <label>PIBF1</label>
    </interactant>
    <organismsDiffer>false</organismsDiffer>
    <experiments>3</experiments>
</comment>
<comment type="interaction">
    <interactant intactId="EBI-2349927">
        <id>Q5JST6</id>
    </interactant>
    <interactant intactId="EBI-79165">
        <id>Q9NRD5</id>
        <label>PICK1</label>
    </interactant>
    <organismsDiffer>false</organismsDiffer>
    <experiments>3</experiments>
</comment>
<comment type="interaction">
    <interactant intactId="EBI-2349927">
        <id>Q5JST6</id>
    </interactant>
    <interactant intactId="EBI-741582">
        <id>O60568</id>
        <label>PLOD3</label>
    </interactant>
    <organismsDiffer>false</organismsDiffer>
    <experiments>12</experiments>
</comment>
<comment type="interaction">
    <interactant intactId="EBI-2349927">
        <id>Q5JST6</id>
    </interactant>
    <interactant intactId="EBI-1055079">
        <id>O15160</id>
        <label>POLR1C</label>
    </interactant>
    <organismsDiffer>false</organismsDiffer>
    <experiments>3</experiments>
</comment>
<comment type="interaction">
    <interactant intactId="EBI-2349927">
        <id>Q5JST6</id>
    </interactant>
    <interactant intactId="EBI-2798416">
        <id>Q99633</id>
        <label>PRPF18</label>
    </interactant>
    <organismsDiffer>false</organismsDiffer>
    <experiments>3</experiments>
</comment>
<comment type="interaction">
    <interactant intactId="EBI-2349927">
        <id>Q5JST6</id>
    </interactant>
    <interactant intactId="EBI-1383632">
        <id>Q13882</id>
        <label>PTK6</label>
    </interactant>
    <organismsDiffer>false</organismsDiffer>
    <experiments>7</experiments>
</comment>
<comment type="interaction">
    <interactant intactId="EBI-2349927">
        <id>Q5JST6</id>
    </interactant>
    <interactant intactId="EBI-347462">
        <id>P47897</id>
        <label>QARS1</label>
    </interactant>
    <organismsDiffer>false</organismsDiffer>
    <experiments>3</experiments>
</comment>
<comment type="interaction">
    <interactant intactId="EBI-2349927">
        <id>Q5JST6</id>
    </interactant>
    <interactant intactId="EBI-1055693">
        <id>O75771</id>
        <label>RAD51D</label>
    </interactant>
    <organismsDiffer>false</organismsDiffer>
    <experiments>3</experiments>
</comment>
<comment type="interaction">
    <interactant intactId="EBI-2349927">
        <id>Q5JST6</id>
    </interactant>
    <interactant intactId="EBI-1504830">
        <id>Q9P2K3-2</id>
        <label>RCOR3</label>
    </interactant>
    <organismsDiffer>false</organismsDiffer>
    <experiments>3</experiments>
</comment>
<comment type="interaction">
    <interactant intactId="EBI-2349927">
        <id>Q5JST6</id>
    </interactant>
    <interactant intactId="EBI-10253121">
        <id>Q6P9E2</id>
        <label>RECK</label>
    </interactant>
    <organismsDiffer>false</organismsDiffer>
    <experiments>3</experiments>
</comment>
<comment type="interaction">
    <interactant intactId="EBI-2349927">
        <id>Q5JST6</id>
    </interactant>
    <interactant intactId="EBI-2367123">
        <id>O94955</id>
        <label>RHOBTB3</label>
    </interactant>
    <organismsDiffer>false</organismsDiffer>
    <experiments>3</experiments>
</comment>
<comment type="interaction">
    <interactant intactId="EBI-2349927">
        <id>Q5JST6</id>
    </interactant>
    <interactant intactId="EBI-10224192">
        <id>Q06455-4</id>
        <label>RUNX1T1</label>
    </interactant>
    <organismsDiffer>false</organismsDiffer>
    <experiments>3</experiments>
</comment>
<comment type="interaction">
    <interactant intactId="EBI-2349927">
        <id>Q5JST6</id>
    </interactant>
    <interactant intactId="EBI-9675976">
        <id>Q9BV90</id>
        <label>SNRNP25</label>
    </interactant>
    <organismsDiffer>false</organismsDiffer>
    <experiments>6</experiments>
</comment>
<comment type="interaction">
    <interactant intactId="EBI-2349927">
        <id>Q5JST6</id>
    </interactant>
    <interactant intactId="EBI-11334239">
        <id>Q8TC71</id>
        <label>SPATA18</label>
    </interactant>
    <organismsDiffer>false</organismsDiffer>
    <experiments>3</experiments>
</comment>
<comment type="interaction">
    <interactant intactId="EBI-2349927">
        <id>Q5JST6</id>
    </interactant>
    <interactant intactId="EBI-742688">
        <id>Q9NZD8</id>
        <label>SPG21</label>
    </interactant>
    <organismsDiffer>false</organismsDiffer>
    <experiments>6</experiments>
</comment>
<comment type="interaction">
    <interactant intactId="EBI-2349927">
        <id>Q5JST6</id>
    </interactant>
    <interactant intactId="EBI-749295">
        <id>O75716</id>
        <label>STK16</label>
    </interactant>
    <organismsDiffer>false</organismsDiffer>
    <experiments>3</experiments>
</comment>
<comment type="interaction">
    <interactant intactId="EBI-2349927">
        <id>Q5JST6</id>
    </interactant>
    <interactant intactId="EBI-1644036">
        <id>Q86TI0</id>
        <label>TBC1D1</label>
    </interactant>
    <organismsDiffer>false</organismsDiffer>
    <experiments>3</experiments>
</comment>
<comment type="interaction">
    <interactant intactId="EBI-2349927">
        <id>Q5JST6</id>
    </interactant>
    <interactant intactId="EBI-8787464">
        <id>Q9NU19</id>
        <label>TBC1D22B</label>
    </interactant>
    <organismsDiffer>false</organismsDiffer>
    <experiments>3</experiments>
</comment>
<comment type="interaction">
    <interactant intactId="EBI-2349927">
        <id>Q5JST6</id>
    </interactant>
    <interactant intactId="EBI-750487">
        <id>Q8WW24</id>
        <label>TEKT4</label>
    </interactant>
    <organismsDiffer>false</organismsDiffer>
    <experiments>3</experiments>
</comment>
<comment type="interaction">
    <interactant intactId="EBI-2349927">
        <id>Q5JST6</id>
    </interactant>
    <interactant intactId="EBI-5235829">
        <id>Q8IWZ5</id>
        <label>TRIM42</label>
    </interactant>
    <organismsDiffer>false</organismsDiffer>
    <experiments>3</experiments>
</comment>
<comment type="interaction">
    <interactant intactId="EBI-2349927">
        <id>Q5JST6</id>
    </interactant>
    <interactant intactId="EBI-9867283">
        <id>Q86XT4</id>
        <label>TRIM50</label>
    </interactant>
    <organismsDiffer>false</organismsDiffer>
    <experiments>3</experiments>
</comment>
<comment type="interaction">
    <interactant intactId="EBI-2349927">
        <id>Q5JST6</id>
    </interactant>
    <interactant intactId="EBI-3918381">
        <id>Q96PN8</id>
        <label>TSSK3</label>
    </interactant>
    <organismsDiffer>false</organismsDiffer>
    <experiments>6</experiments>
</comment>
<comment type="interaction">
    <interactant intactId="EBI-2349927">
        <id>Q5JST6</id>
    </interactant>
    <interactant intactId="EBI-7877438">
        <id>P42681</id>
        <label>TXK</label>
    </interactant>
    <organismsDiffer>false</organismsDiffer>
    <experiments>3</experiments>
</comment>
<comment type="interaction">
    <interactant intactId="EBI-2349927">
        <id>Q5JST6</id>
    </interactant>
    <interactant intactId="EBI-632461">
        <id>Q01081</id>
        <label>U2AF1</label>
    </interactant>
    <organismsDiffer>false</organismsDiffer>
    <experiments>3</experiments>
</comment>
<comment type="interaction">
    <interactant intactId="EBI-2349927">
        <id>Q5JST6</id>
    </interactant>
    <interactant intactId="EBI-743272">
        <id>O75604</id>
        <label>USP2</label>
    </interactant>
    <organismsDiffer>false</organismsDiffer>
    <experiments>3</experiments>
</comment>
<comment type="interaction">
    <interactant intactId="EBI-2349927">
        <id>Q5JST6</id>
    </interactant>
    <interactant intactId="EBI-711925">
        <id>Q05516</id>
        <label>ZBTB16</label>
    </interactant>
    <organismsDiffer>false</organismsDiffer>
    <experiments>3</experiments>
</comment>
<comment type="interaction">
    <interactant intactId="EBI-2349927">
        <id>Q5JST6</id>
    </interactant>
    <interactant intactId="EBI-10237226">
        <id>Q15911-2</id>
        <label>ZFHX3</label>
    </interactant>
    <organismsDiffer>false</organismsDiffer>
    <experiments>3</experiments>
</comment>
<comment type="interaction">
    <interactant intactId="EBI-2349927">
        <id>Q5JST6</id>
    </interactant>
    <interactant intactId="EBI-2795524">
        <id>Q8IYH5</id>
        <label>ZZZ3</label>
    </interactant>
    <organismsDiffer>false</organismsDiffer>
    <experiments>3</experiments>
</comment>
<comment type="interaction">
    <interactant intactId="EBI-2349927">
        <id>Q5JST6</id>
    </interactant>
    <interactant intactId="EBI-10174671">
        <id>A8K932</id>
    </interactant>
    <organismsDiffer>false</organismsDiffer>
    <experiments>3</experiments>
</comment>
<comment type="interaction">
    <interactant intactId="EBI-2349927">
        <id>Q5JST6</id>
    </interactant>
    <interactant intactId="EBI-10266435">
        <id>Q8N5D4</id>
    </interactant>
    <organismsDiffer>false</organismsDiffer>
    <experiments>3</experiments>
</comment>
<comment type="subcellular location">
    <subcellularLocation>
        <location evidence="5">Cytoplasm</location>
        <location evidence="5">Cytoskeleton</location>
        <location evidence="5">Cilium axoneme</location>
    </subcellularLocation>
    <subcellularLocation>
        <location evidence="1">Cytoplasm</location>
        <location evidence="1">Cytoskeleton</location>
        <location evidence="1">Flagellum axoneme</location>
    </subcellularLocation>
</comment>
<comment type="alternative products">
    <event type="alternative splicing"/>
    <isoform>
        <id>Q5JST6-1</id>
        <name>1</name>
        <sequence type="displayed"/>
    </isoform>
    <isoform>
        <id>Q5JST6-2</id>
        <name>2</name>
        <sequence type="described" ref="VSP_020766"/>
    </isoform>
</comment>
<comment type="tissue specificity">
    <text evidence="5">Expressed in airway epithelial cells.</text>
</comment>